<proteinExistence type="inferred from homology"/>
<organism>
    <name type="scientific">Yersinia pseudotuberculosis serotype I (strain IP32953)</name>
    <dbReference type="NCBI Taxonomy" id="273123"/>
    <lineage>
        <taxon>Bacteria</taxon>
        <taxon>Pseudomonadati</taxon>
        <taxon>Pseudomonadota</taxon>
        <taxon>Gammaproteobacteria</taxon>
        <taxon>Enterobacterales</taxon>
        <taxon>Yersiniaceae</taxon>
        <taxon>Yersinia</taxon>
    </lineage>
</organism>
<comment type="function">
    <text evidence="1">Catalyzes the 2-thiolation of uridine at the wobble position (U34) of tRNA(Lys), tRNA(Glu) and tRNA(Gln), leading to the formation of s(2)U34, the first step of tRNA-mnm(5)s(2)U34 synthesis. Sulfur is provided by IscS, via a sulfur-relay system. Binds ATP and its substrate tRNAs.</text>
</comment>
<comment type="catalytic activity">
    <reaction evidence="1">
        <text>S-sulfanyl-L-cysteinyl-[protein] + uridine(34) in tRNA + AH2 + ATP = 2-thiouridine(34) in tRNA + L-cysteinyl-[protein] + A + AMP + diphosphate + H(+)</text>
        <dbReference type="Rhea" id="RHEA:47032"/>
        <dbReference type="Rhea" id="RHEA-COMP:10131"/>
        <dbReference type="Rhea" id="RHEA-COMP:11726"/>
        <dbReference type="Rhea" id="RHEA-COMP:11727"/>
        <dbReference type="Rhea" id="RHEA-COMP:11728"/>
        <dbReference type="ChEBI" id="CHEBI:13193"/>
        <dbReference type="ChEBI" id="CHEBI:15378"/>
        <dbReference type="ChEBI" id="CHEBI:17499"/>
        <dbReference type="ChEBI" id="CHEBI:29950"/>
        <dbReference type="ChEBI" id="CHEBI:30616"/>
        <dbReference type="ChEBI" id="CHEBI:33019"/>
        <dbReference type="ChEBI" id="CHEBI:61963"/>
        <dbReference type="ChEBI" id="CHEBI:65315"/>
        <dbReference type="ChEBI" id="CHEBI:87170"/>
        <dbReference type="ChEBI" id="CHEBI:456215"/>
        <dbReference type="EC" id="2.8.1.13"/>
    </reaction>
</comment>
<comment type="subunit">
    <text evidence="1">Interacts with TusE.</text>
</comment>
<comment type="subcellular location">
    <subcellularLocation>
        <location evidence="1">Cytoplasm</location>
    </subcellularLocation>
</comment>
<comment type="similarity">
    <text evidence="1">Belongs to the MnmA/TRMU family.</text>
</comment>
<reference key="1">
    <citation type="journal article" date="2004" name="Proc. Natl. Acad. Sci. U.S.A.">
        <title>Insights into the evolution of Yersinia pestis through whole-genome comparison with Yersinia pseudotuberculosis.</title>
        <authorList>
            <person name="Chain P.S.G."/>
            <person name="Carniel E."/>
            <person name="Larimer F.W."/>
            <person name="Lamerdin J."/>
            <person name="Stoutland P.O."/>
            <person name="Regala W.M."/>
            <person name="Georgescu A.M."/>
            <person name="Vergez L.M."/>
            <person name="Land M.L."/>
            <person name="Motin V.L."/>
            <person name="Brubaker R.R."/>
            <person name="Fowler J."/>
            <person name="Hinnebusch J."/>
            <person name="Marceau M."/>
            <person name="Medigue C."/>
            <person name="Simonet M."/>
            <person name="Chenal-Francisque V."/>
            <person name="Souza B."/>
            <person name="Dacheux D."/>
            <person name="Elliott J.M."/>
            <person name="Derbise A."/>
            <person name="Hauser L.J."/>
            <person name="Garcia E."/>
        </authorList>
    </citation>
    <scope>NUCLEOTIDE SEQUENCE [LARGE SCALE GENOMIC DNA]</scope>
    <source>
        <strain>IP32953</strain>
    </source>
</reference>
<gene>
    <name evidence="1" type="primary">mnmA</name>
    <name type="synonym">trmU</name>
    <name type="ordered locus">YPTB2430</name>
</gene>
<evidence type="ECO:0000255" key="1">
    <source>
        <dbReference type="HAMAP-Rule" id="MF_00144"/>
    </source>
</evidence>
<protein>
    <recommendedName>
        <fullName evidence="1">tRNA-specific 2-thiouridylase MnmA</fullName>
        <ecNumber evidence="1">2.8.1.13</ecNumber>
    </recommendedName>
</protein>
<accession>Q669Q4</accession>
<keyword id="KW-0067">ATP-binding</keyword>
<keyword id="KW-0963">Cytoplasm</keyword>
<keyword id="KW-1015">Disulfide bond</keyword>
<keyword id="KW-0547">Nucleotide-binding</keyword>
<keyword id="KW-0694">RNA-binding</keyword>
<keyword id="KW-0808">Transferase</keyword>
<keyword id="KW-0819">tRNA processing</keyword>
<keyword id="KW-0820">tRNA-binding</keyword>
<name>MNMA_YERPS</name>
<dbReference type="EC" id="2.8.1.13" evidence="1"/>
<dbReference type="EMBL" id="BX936398">
    <property type="protein sequence ID" value="CAH21668.1"/>
    <property type="molecule type" value="Genomic_DNA"/>
</dbReference>
<dbReference type="RefSeq" id="WP_002210913.1">
    <property type="nucleotide sequence ID" value="NZ_CP009712.1"/>
</dbReference>
<dbReference type="SMR" id="Q669Q4"/>
<dbReference type="GeneID" id="57976935"/>
<dbReference type="KEGG" id="ypo:BZ17_20"/>
<dbReference type="KEGG" id="yps:YPTB2430"/>
<dbReference type="PATRIC" id="fig|273123.14.peg.21"/>
<dbReference type="Proteomes" id="UP000001011">
    <property type="component" value="Chromosome"/>
</dbReference>
<dbReference type="GO" id="GO:0005737">
    <property type="term" value="C:cytoplasm"/>
    <property type="evidence" value="ECO:0007669"/>
    <property type="project" value="UniProtKB-SubCell"/>
</dbReference>
<dbReference type="GO" id="GO:0005524">
    <property type="term" value="F:ATP binding"/>
    <property type="evidence" value="ECO:0007669"/>
    <property type="project" value="UniProtKB-KW"/>
</dbReference>
<dbReference type="GO" id="GO:0000049">
    <property type="term" value="F:tRNA binding"/>
    <property type="evidence" value="ECO:0007669"/>
    <property type="project" value="UniProtKB-KW"/>
</dbReference>
<dbReference type="GO" id="GO:0103016">
    <property type="term" value="F:tRNA-uridine 2-sulfurtransferase activity"/>
    <property type="evidence" value="ECO:0007669"/>
    <property type="project" value="UniProtKB-EC"/>
</dbReference>
<dbReference type="GO" id="GO:0002143">
    <property type="term" value="P:tRNA wobble position uridine thiolation"/>
    <property type="evidence" value="ECO:0007669"/>
    <property type="project" value="TreeGrafter"/>
</dbReference>
<dbReference type="CDD" id="cd01998">
    <property type="entry name" value="MnmA_TRMU-like"/>
    <property type="match status" value="1"/>
</dbReference>
<dbReference type="FunFam" id="2.30.30.280:FF:000001">
    <property type="entry name" value="tRNA-specific 2-thiouridylase MnmA"/>
    <property type="match status" value="1"/>
</dbReference>
<dbReference type="FunFam" id="2.40.30.10:FF:000023">
    <property type="entry name" value="tRNA-specific 2-thiouridylase MnmA"/>
    <property type="match status" value="1"/>
</dbReference>
<dbReference type="FunFam" id="3.40.50.620:FF:000004">
    <property type="entry name" value="tRNA-specific 2-thiouridylase MnmA"/>
    <property type="match status" value="1"/>
</dbReference>
<dbReference type="Gene3D" id="2.30.30.280">
    <property type="entry name" value="Adenine nucleotide alpha hydrolases-like domains"/>
    <property type="match status" value="1"/>
</dbReference>
<dbReference type="Gene3D" id="3.40.50.620">
    <property type="entry name" value="HUPs"/>
    <property type="match status" value="1"/>
</dbReference>
<dbReference type="Gene3D" id="2.40.30.10">
    <property type="entry name" value="Translation factors"/>
    <property type="match status" value="1"/>
</dbReference>
<dbReference type="HAMAP" id="MF_00144">
    <property type="entry name" value="tRNA_thiouridyl_MnmA"/>
    <property type="match status" value="1"/>
</dbReference>
<dbReference type="InterPro" id="IPR004506">
    <property type="entry name" value="MnmA-like"/>
</dbReference>
<dbReference type="InterPro" id="IPR046885">
    <property type="entry name" value="MnmA-like_C"/>
</dbReference>
<dbReference type="InterPro" id="IPR046884">
    <property type="entry name" value="MnmA-like_central"/>
</dbReference>
<dbReference type="InterPro" id="IPR023382">
    <property type="entry name" value="MnmA-like_central_sf"/>
</dbReference>
<dbReference type="InterPro" id="IPR014729">
    <property type="entry name" value="Rossmann-like_a/b/a_fold"/>
</dbReference>
<dbReference type="NCBIfam" id="NF001138">
    <property type="entry name" value="PRK00143.1"/>
    <property type="match status" value="1"/>
</dbReference>
<dbReference type="NCBIfam" id="TIGR00420">
    <property type="entry name" value="trmU"/>
    <property type="match status" value="1"/>
</dbReference>
<dbReference type="PANTHER" id="PTHR11933:SF5">
    <property type="entry name" value="MITOCHONDRIAL TRNA-SPECIFIC 2-THIOURIDYLASE 1"/>
    <property type="match status" value="1"/>
</dbReference>
<dbReference type="PANTHER" id="PTHR11933">
    <property type="entry name" value="TRNA 5-METHYLAMINOMETHYL-2-THIOURIDYLATE -METHYLTRANSFERASE"/>
    <property type="match status" value="1"/>
</dbReference>
<dbReference type="Pfam" id="PF03054">
    <property type="entry name" value="tRNA_Me_trans"/>
    <property type="match status" value="1"/>
</dbReference>
<dbReference type="Pfam" id="PF20258">
    <property type="entry name" value="tRNA_Me_trans_C"/>
    <property type="match status" value="1"/>
</dbReference>
<dbReference type="Pfam" id="PF20259">
    <property type="entry name" value="tRNA_Me_trans_M"/>
    <property type="match status" value="1"/>
</dbReference>
<dbReference type="SUPFAM" id="SSF52402">
    <property type="entry name" value="Adenine nucleotide alpha hydrolases-like"/>
    <property type="match status" value="1"/>
</dbReference>
<feature type="chain" id="PRO_0000121597" description="tRNA-specific 2-thiouridylase MnmA">
    <location>
        <begin position="1"/>
        <end position="371"/>
    </location>
</feature>
<feature type="region of interest" description="Interaction with target base in tRNA" evidence="1">
    <location>
        <begin position="98"/>
        <end position="100"/>
    </location>
</feature>
<feature type="region of interest" description="Interaction with tRNA" evidence="1">
    <location>
        <begin position="150"/>
        <end position="152"/>
    </location>
</feature>
<feature type="region of interest" description="Interaction with tRNA" evidence="1">
    <location>
        <begin position="312"/>
        <end position="313"/>
    </location>
</feature>
<feature type="active site" description="Nucleophile" evidence="1">
    <location>
        <position position="103"/>
    </location>
</feature>
<feature type="active site" description="Cysteine persulfide intermediate" evidence="1">
    <location>
        <position position="200"/>
    </location>
</feature>
<feature type="binding site" evidence="1">
    <location>
        <begin position="12"/>
        <end position="19"/>
    </location>
    <ligand>
        <name>ATP</name>
        <dbReference type="ChEBI" id="CHEBI:30616"/>
    </ligand>
</feature>
<feature type="binding site" evidence="1">
    <location>
        <position position="38"/>
    </location>
    <ligand>
        <name>ATP</name>
        <dbReference type="ChEBI" id="CHEBI:30616"/>
    </ligand>
</feature>
<feature type="binding site" evidence="1">
    <location>
        <position position="128"/>
    </location>
    <ligand>
        <name>ATP</name>
        <dbReference type="ChEBI" id="CHEBI:30616"/>
    </ligand>
</feature>
<feature type="site" description="Interaction with tRNA" evidence="1">
    <location>
        <position position="129"/>
    </location>
</feature>
<feature type="site" description="Interaction with tRNA" evidence="1">
    <location>
        <position position="345"/>
    </location>
</feature>
<feature type="disulfide bond" description="Alternate" evidence="1">
    <location>
        <begin position="103"/>
        <end position="200"/>
    </location>
</feature>
<sequence>MSDNSQKKVIVGMSGGVDSSVSAYLLQQQGYQVAGLFMKNWEEDDDEEYCSAATDLADAQAVCDKLGMELHTVNFAAEYWDNVFELFLAEYKAGRTPNPDILCNKEIKFKAFLEFAAEDLGADYIATGHYVRRQDVDGKSRLLRGLDGNKDQSYFLYTLSHEQIAQSLFPVGELEKPEVRRIAEQLDLVTAKKKDSTGICFIGERKFRDFLGRYLPAQPGPIMTVDGQLVGKHQGLMYHTLGQRKGLGIGGTKEGGDDPWYVVDKDLDSNTLLVAQGHEHPRLMSVGLVAQQLHWVDRQPVTAPFRCVVKTRYRQQDIPCTVTPLDDERVDVRFDDPVAAVTPGQSAVFYQGEICLGGGIIEQRYPLTNPA</sequence>